<accession>A3AB67</accession>
<accession>Q0DXQ8</accession>
<organism>
    <name type="scientific">Oryza sativa subsp. japonica</name>
    <name type="common">Rice</name>
    <dbReference type="NCBI Taxonomy" id="39947"/>
    <lineage>
        <taxon>Eukaryota</taxon>
        <taxon>Viridiplantae</taxon>
        <taxon>Streptophyta</taxon>
        <taxon>Embryophyta</taxon>
        <taxon>Tracheophyta</taxon>
        <taxon>Spermatophyta</taxon>
        <taxon>Magnoliopsida</taxon>
        <taxon>Liliopsida</taxon>
        <taxon>Poales</taxon>
        <taxon>Poaceae</taxon>
        <taxon>BOP clade</taxon>
        <taxon>Oryzoideae</taxon>
        <taxon>Oryzeae</taxon>
        <taxon>Oryzinae</taxon>
        <taxon>Oryza</taxon>
        <taxon>Oryza sativa</taxon>
    </lineage>
</organism>
<dbReference type="EMBL" id="AP008208">
    <property type="protein sequence ID" value="BAF09980.1"/>
    <property type="status" value="ALT_SEQ"/>
    <property type="molecule type" value="Genomic_DNA"/>
</dbReference>
<dbReference type="EMBL" id="AP014958">
    <property type="status" value="NOT_ANNOTATED_CDS"/>
    <property type="molecule type" value="Genomic_DNA"/>
</dbReference>
<dbReference type="EMBL" id="CM000139">
    <property type="protein sequence ID" value="EAZ24556.1"/>
    <property type="molecule type" value="Genomic_DNA"/>
</dbReference>
<dbReference type="EMBL" id="AK072070">
    <property type="status" value="NOT_ANNOTATED_CDS"/>
    <property type="molecule type" value="mRNA"/>
</dbReference>
<dbReference type="RefSeq" id="XP_015625870.1">
    <property type="nucleotide sequence ID" value="XM_015770384.1"/>
</dbReference>
<dbReference type="SMR" id="A3AB67"/>
<dbReference type="FunCoup" id="A3AB67">
    <property type="interactions" value="1165"/>
</dbReference>
<dbReference type="STRING" id="39947.A3AB67"/>
<dbReference type="iPTMnet" id="A3AB67"/>
<dbReference type="PaxDb" id="39947-A3AB67"/>
<dbReference type="KEGG" id="dosa:Os02g0739100"/>
<dbReference type="eggNOG" id="KOG1922">
    <property type="taxonomic scope" value="Eukaryota"/>
</dbReference>
<dbReference type="InParanoid" id="A3AB67"/>
<dbReference type="OrthoDB" id="1668162at2759"/>
<dbReference type="Proteomes" id="UP000000763">
    <property type="component" value="Chromosome 2"/>
</dbReference>
<dbReference type="Proteomes" id="UP000007752">
    <property type="component" value="Chromosome 2"/>
</dbReference>
<dbReference type="Proteomes" id="UP000059680">
    <property type="component" value="Chromosome 2"/>
</dbReference>
<dbReference type="GO" id="GO:0005856">
    <property type="term" value="C:cytoskeleton"/>
    <property type="evidence" value="ECO:0000318"/>
    <property type="project" value="GO_Central"/>
</dbReference>
<dbReference type="GO" id="GO:0016020">
    <property type="term" value="C:membrane"/>
    <property type="evidence" value="ECO:0007669"/>
    <property type="project" value="UniProtKB-SubCell"/>
</dbReference>
<dbReference type="GO" id="GO:0051015">
    <property type="term" value="F:actin filament binding"/>
    <property type="evidence" value="ECO:0000318"/>
    <property type="project" value="GO_Central"/>
</dbReference>
<dbReference type="GO" id="GO:0030036">
    <property type="term" value="P:actin cytoskeleton organization"/>
    <property type="evidence" value="ECO:0000318"/>
    <property type="project" value="GO_Central"/>
</dbReference>
<dbReference type="GO" id="GO:0045010">
    <property type="term" value="P:actin nucleation"/>
    <property type="evidence" value="ECO:0007669"/>
    <property type="project" value="InterPro"/>
</dbReference>
<dbReference type="Gene3D" id="1.20.58.2220">
    <property type="entry name" value="Formin, FH2 domain"/>
    <property type="match status" value="1"/>
</dbReference>
<dbReference type="InterPro" id="IPR015425">
    <property type="entry name" value="FH2_Formin"/>
</dbReference>
<dbReference type="InterPro" id="IPR042201">
    <property type="entry name" value="FH2_Formin_sf"/>
</dbReference>
<dbReference type="InterPro" id="IPR027643">
    <property type="entry name" value="Formin-like_plant"/>
</dbReference>
<dbReference type="PANTHER" id="PTHR23213:SF354">
    <property type="entry name" value="FORMIN-LIKE PROTEIN 4"/>
    <property type="match status" value="1"/>
</dbReference>
<dbReference type="PANTHER" id="PTHR23213">
    <property type="entry name" value="FORMIN-RELATED"/>
    <property type="match status" value="1"/>
</dbReference>
<dbReference type="Pfam" id="PF02181">
    <property type="entry name" value="FH2"/>
    <property type="match status" value="1"/>
</dbReference>
<dbReference type="SMART" id="SM00498">
    <property type="entry name" value="FH2"/>
    <property type="match status" value="1"/>
</dbReference>
<dbReference type="SUPFAM" id="SSF101447">
    <property type="entry name" value="Formin homology 2 domain (FH2 domain)"/>
    <property type="match status" value="1"/>
</dbReference>
<dbReference type="PROSITE" id="PS51444">
    <property type="entry name" value="FH2"/>
    <property type="match status" value="1"/>
</dbReference>
<name>FH16_ORYSJ</name>
<sequence>MAPAPSPTPLPLFLLLLLLVGVAPLAAAQGQNIQTRFPSTRTPAFATPPPITSPSPSPGTPTATPSSSPPSSSGKRSDIAVAVVSTALSSFAVSGLAFFLFLRHGKKRELTEAGGAGQHYGGAQGGALTGKRPEREPKRPARGNMVDENGLDAIYWREFEKEGDGGRGRKPPASRRPPQPPPPRPYRAERRQDAHESSAPSPPRSRKNRIDQEPLIPRGSLDSASAEFDESLYAPSAGSTSSFSVAAAEAYARPPSTPAITAVSSVPRSSPSPAPAPAARPASPSPSLPLPPGRESPSRPQSIAAAAVASPAPPPPPPPKPAAAAPPPPPPPKAAPPPPPPKGPPPPPPAKGPPPPPPPKGPSPPPPPPPGGKKGGPPPPPPKGGASRPPAAPGVPTGSADQQAKLKPLHWDKVNVAATDHSMVWDNITGGSFNLDEGIIEALFGTAAVNRKTKPADSKDASGGSTSAGLGRSNSPEQIFLLEPRKSHNISIILRSLTVGREEIIDALLNGHTELSTEVLEKLSRLNISKEEENTLLKFSGNPDRLAPAEFFLLRLLLDVPSPFARVNALLFKANYAAEVAQLKQSLRTLEMASQELRTKGLFFKLLEAVLKAGNRMNAGTARGNAQAFNLTALRKLSDVKSTDGSTTLLHFVIEEVVRSEGKRLAINRNYSLRRSGSLAKSTDGGNPAASSTSQGPSREERQNEYLNLGLPIVGGLSTEFANVKKAALVDYDTVVNECAILGNRLAGTKKLLETYGDDGFARGLRGFVKAAEQELNELKGNQEKVLELVQRTTEYYHTGATKDKNAHPLQLFIIVRDFLGMVDQACVDIKRKLQQQKKPTPPPSSSQPAAPAATTKGAADDAPAPAQKPPEEVDSKRKRVMPRFPNLPAHFMKDNADSDSSSDEE</sequence>
<proteinExistence type="evidence at transcript level"/>
<feature type="signal peptide" evidence="1">
    <location>
        <begin position="1"/>
        <end position="28"/>
    </location>
</feature>
<feature type="chain" id="PRO_0000319006" description="Formin-like protein 16">
    <location>
        <begin position="29"/>
        <end position="906"/>
    </location>
</feature>
<feature type="transmembrane region" description="Helical" evidence="1">
    <location>
        <begin position="81"/>
        <end position="101"/>
    </location>
</feature>
<feature type="domain" description="FH2" evidence="2">
    <location>
        <begin position="396"/>
        <end position="849"/>
    </location>
</feature>
<feature type="region of interest" description="Disordered" evidence="3">
    <location>
        <begin position="34"/>
        <end position="76"/>
    </location>
</feature>
<feature type="region of interest" description="Disordered" evidence="3">
    <location>
        <begin position="113"/>
        <end position="149"/>
    </location>
</feature>
<feature type="region of interest" description="Disordered" evidence="3">
    <location>
        <begin position="161"/>
        <end position="223"/>
    </location>
</feature>
<feature type="region of interest" description="Disordered" evidence="3">
    <location>
        <begin position="250"/>
        <end position="404"/>
    </location>
</feature>
<feature type="region of interest" description="Disordered" evidence="3">
    <location>
        <begin position="451"/>
        <end position="474"/>
    </location>
</feature>
<feature type="region of interest" description="Disordered" evidence="3">
    <location>
        <begin position="677"/>
        <end position="702"/>
    </location>
</feature>
<feature type="region of interest" description="Disordered" evidence="3">
    <location>
        <begin position="834"/>
        <end position="906"/>
    </location>
</feature>
<feature type="compositionally biased region" description="Pro residues" evidence="3">
    <location>
        <begin position="46"/>
        <end position="59"/>
    </location>
</feature>
<feature type="compositionally biased region" description="Low complexity" evidence="3">
    <location>
        <begin position="60"/>
        <end position="73"/>
    </location>
</feature>
<feature type="compositionally biased region" description="Gly residues" evidence="3">
    <location>
        <begin position="114"/>
        <end position="128"/>
    </location>
</feature>
<feature type="compositionally biased region" description="Pro residues" evidence="3">
    <location>
        <begin position="174"/>
        <end position="185"/>
    </location>
</feature>
<feature type="compositionally biased region" description="Basic and acidic residues" evidence="3">
    <location>
        <begin position="186"/>
        <end position="196"/>
    </location>
</feature>
<feature type="compositionally biased region" description="Pro residues" evidence="3">
    <location>
        <begin position="270"/>
        <end position="294"/>
    </location>
</feature>
<feature type="compositionally biased region" description="Low complexity" evidence="3">
    <location>
        <begin position="295"/>
        <end position="310"/>
    </location>
</feature>
<feature type="compositionally biased region" description="Pro residues" evidence="3">
    <location>
        <begin position="311"/>
        <end position="383"/>
    </location>
</feature>
<feature type="compositionally biased region" description="Polar residues" evidence="3">
    <location>
        <begin position="463"/>
        <end position="474"/>
    </location>
</feature>
<feature type="compositionally biased region" description="Polar residues" evidence="3">
    <location>
        <begin position="677"/>
        <end position="697"/>
    </location>
</feature>
<feature type="compositionally biased region" description="Low complexity" evidence="3">
    <location>
        <begin position="847"/>
        <end position="866"/>
    </location>
</feature>
<feature type="sequence conflict" description="In Ref. 5; AK072070." evidence="4" ref="5">
    <original>D</original>
    <variation>V</variation>
    <location>
        <position position="829"/>
    </location>
</feature>
<keyword id="KW-0472">Membrane</keyword>
<keyword id="KW-1185">Reference proteome</keyword>
<keyword id="KW-0732">Signal</keyword>
<keyword id="KW-0812">Transmembrane</keyword>
<keyword id="KW-1133">Transmembrane helix</keyword>
<evidence type="ECO:0000255" key="1"/>
<evidence type="ECO:0000255" key="2">
    <source>
        <dbReference type="PROSITE-ProRule" id="PRU00774"/>
    </source>
</evidence>
<evidence type="ECO:0000256" key="3">
    <source>
        <dbReference type="SAM" id="MobiDB-lite"/>
    </source>
</evidence>
<evidence type="ECO:0000305" key="4"/>
<gene>
    <name type="primary">FH16</name>
    <name type="ordered locus">Os02g0739100</name>
    <name type="ordered locus">LOC_Os02g50570</name>
    <name type="ORF">OsJ_008039</name>
</gene>
<reference key="1">
    <citation type="journal article" date="2005" name="Nature">
        <title>The map-based sequence of the rice genome.</title>
        <authorList>
            <consortium name="International rice genome sequencing project (IRGSP)"/>
        </authorList>
    </citation>
    <scope>NUCLEOTIDE SEQUENCE [LARGE SCALE GENOMIC DNA]</scope>
    <source>
        <strain>cv. Nipponbare</strain>
    </source>
</reference>
<reference key="2">
    <citation type="journal article" date="2008" name="Nucleic Acids Res.">
        <title>The rice annotation project database (RAP-DB): 2008 update.</title>
        <authorList>
            <consortium name="The rice annotation project (RAP)"/>
        </authorList>
    </citation>
    <scope>GENOME REANNOTATION</scope>
    <source>
        <strain>cv. Nipponbare</strain>
    </source>
</reference>
<reference key="3">
    <citation type="journal article" date="2013" name="Rice">
        <title>Improvement of the Oryza sativa Nipponbare reference genome using next generation sequence and optical map data.</title>
        <authorList>
            <person name="Kawahara Y."/>
            <person name="de la Bastide M."/>
            <person name="Hamilton J.P."/>
            <person name="Kanamori H."/>
            <person name="McCombie W.R."/>
            <person name="Ouyang S."/>
            <person name="Schwartz D.C."/>
            <person name="Tanaka T."/>
            <person name="Wu J."/>
            <person name="Zhou S."/>
            <person name="Childs K.L."/>
            <person name="Davidson R.M."/>
            <person name="Lin H."/>
            <person name="Quesada-Ocampo L."/>
            <person name="Vaillancourt B."/>
            <person name="Sakai H."/>
            <person name="Lee S.S."/>
            <person name="Kim J."/>
            <person name="Numa H."/>
            <person name="Itoh T."/>
            <person name="Buell C.R."/>
            <person name="Matsumoto T."/>
        </authorList>
    </citation>
    <scope>GENOME REANNOTATION</scope>
    <source>
        <strain>cv. Nipponbare</strain>
    </source>
</reference>
<reference key="4">
    <citation type="journal article" date="2005" name="PLoS Biol.">
        <title>The genomes of Oryza sativa: a history of duplications.</title>
        <authorList>
            <person name="Yu J."/>
            <person name="Wang J."/>
            <person name="Lin W."/>
            <person name="Li S."/>
            <person name="Li H."/>
            <person name="Zhou J."/>
            <person name="Ni P."/>
            <person name="Dong W."/>
            <person name="Hu S."/>
            <person name="Zeng C."/>
            <person name="Zhang J."/>
            <person name="Zhang Y."/>
            <person name="Li R."/>
            <person name="Xu Z."/>
            <person name="Li S."/>
            <person name="Li X."/>
            <person name="Zheng H."/>
            <person name="Cong L."/>
            <person name="Lin L."/>
            <person name="Yin J."/>
            <person name="Geng J."/>
            <person name="Li G."/>
            <person name="Shi J."/>
            <person name="Liu J."/>
            <person name="Lv H."/>
            <person name="Li J."/>
            <person name="Wang J."/>
            <person name="Deng Y."/>
            <person name="Ran L."/>
            <person name="Shi X."/>
            <person name="Wang X."/>
            <person name="Wu Q."/>
            <person name="Li C."/>
            <person name="Ren X."/>
            <person name="Wang J."/>
            <person name="Wang X."/>
            <person name="Li D."/>
            <person name="Liu D."/>
            <person name="Zhang X."/>
            <person name="Ji Z."/>
            <person name="Zhao W."/>
            <person name="Sun Y."/>
            <person name="Zhang Z."/>
            <person name="Bao J."/>
            <person name="Han Y."/>
            <person name="Dong L."/>
            <person name="Ji J."/>
            <person name="Chen P."/>
            <person name="Wu S."/>
            <person name="Liu J."/>
            <person name="Xiao Y."/>
            <person name="Bu D."/>
            <person name="Tan J."/>
            <person name="Yang L."/>
            <person name="Ye C."/>
            <person name="Zhang J."/>
            <person name="Xu J."/>
            <person name="Zhou Y."/>
            <person name="Yu Y."/>
            <person name="Zhang B."/>
            <person name="Zhuang S."/>
            <person name="Wei H."/>
            <person name="Liu B."/>
            <person name="Lei M."/>
            <person name="Yu H."/>
            <person name="Li Y."/>
            <person name="Xu H."/>
            <person name="Wei S."/>
            <person name="He X."/>
            <person name="Fang L."/>
            <person name="Zhang Z."/>
            <person name="Zhang Y."/>
            <person name="Huang X."/>
            <person name="Su Z."/>
            <person name="Tong W."/>
            <person name="Li J."/>
            <person name="Tong Z."/>
            <person name="Li S."/>
            <person name="Ye J."/>
            <person name="Wang L."/>
            <person name="Fang L."/>
            <person name="Lei T."/>
            <person name="Chen C.-S."/>
            <person name="Chen H.-C."/>
            <person name="Xu Z."/>
            <person name="Li H."/>
            <person name="Huang H."/>
            <person name="Zhang F."/>
            <person name="Xu H."/>
            <person name="Li N."/>
            <person name="Zhao C."/>
            <person name="Li S."/>
            <person name="Dong L."/>
            <person name="Huang Y."/>
            <person name="Li L."/>
            <person name="Xi Y."/>
            <person name="Qi Q."/>
            <person name="Li W."/>
            <person name="Zhang B."/>
            <person name="Hu W."/>
            <person name="Zhang Y."/>
            <person name="Tian X."/>
            <person name="Jiao Y."/>
            <person name="Liang X."/>
            <person name="Jin J."/>
            <person name="Gao L."/>
            <person name="Zheng W."/>
            <person name="Hao B."/>
            <person name="Liu S.-M."/>
            <person name="Wang W."/>
            <person name="Yuan L."/>
            <person name="Cao M."/>
            <person name="McDermott J."/>
            <person name="Samudrala R."/>
            <person name="Wang J."/>
            <person name="Wong G.K.-S."/>
            <person name="Yang H."/>
        </authorList>
    </citation>
    <scope>NUCLEOTIDE SEQUENCE [LARGE SCALE GENOMIC DNA]</scope>
    <source>
        <strain>cv. Nipponbare</strain>
    </source>
</reference>
<reference key="5">
    <citation type="journal article" date="2003" name="Science">
        <title>Collection, mapping, and annotation of over 28,000 cDNA clones from japonica rice.</title>
        <authorList>
            <consortium name="The rice full-length cDNA consortium"/>
        </authorList>
    </citation>
    <scope>NUCLEOTIDE SEQUENCE [LARGE SCALE MRNA]</scope>
    <source>
        <strain>cv. Nipponbare</strain>
    </source>
</reference>
<reference key="6">
    <citation type="journal article" date="2004" name="BMC Genomics">
        <title>Formin homology 2 domains occur in multiple contexts in angiosperms.</title>
        <authorList>
            <person name="Cvrckova F."/>
            <person name="Novotny M."/>
            <person name="Pickova D."/>
            <person name="Zarsky V."/>
        </authorList>
    </citation>
    <scope>GENE FAMILY</scope>
    <scope>NOMENCLATURE</scope>
</reference>
<comment type="subcellular location">
    <subcellularLocation>
        <location evidence="4">Membrane</location>
        <topology evidence="4">Single-pass membrane protein</topology>
    </subcellularLocation>
</comment>
<comment type="similarity">
    <text evidence="4">Belongs to the formin-like family. Class-I subfamily.</text>
</comment>
<comment type="sequence caution" evidence="4">
    <conflict type="miscellaneous discrepancy">
        <sequence resource="EMBL" id="AK072070"/>
    </conflict>
    <text>Probable cloning artifact leading to an internal deletion.</text>
</comment>
<comment type="sequence caution" evidence="4">
    <conflict type="erroneous gene model prediction">
        <sequence resource="EMBL-CDS" id="BAF09980"/>
    </conflict>
</comment>
<protein>
    <recommendedName>
        <fullName>Formin-like protein 16</fullName>
    </recommendedName>
    <alternativeName>
        <fullName>OsFH16</fullName>
    </alternativeName>
</protein>